<dbReference type="EMBL" id="CP001598">
    <property type="protein sequence ID" value="ACQ47955.1"/>
    <property type="molecule type" value="Genomic_DNA"/>
</dbReference>
<dbReference type="SMR" id="C3P9G9"/>
<dbReference type="KEGG" id="bai:BAA_0027"/>
<dbReference type="HOGENOM" id="CLU_140930_1_0_9"/>
<dbReference type="GO" id="GO:0043590">
    <property type="term" value="C:bacterial nucleoid"/>
    <property type="evidence" value="ECO:0007669"/>
    <property type="project" value="UniProtKB-UniRule"/>
</dbReference>
<dbReference type="GO" id="GO:0005829">
    <property type="term" value="C:cytosol"/>
    <property type="evidence" value="ECO:0007669"/>
    <property type="project" value="TreeGrafter"/>
</dbReference>
<dbReference type="GO" id="GO:0003677">
    <property type="term" value="F:DNA binding"/>
    <property type="evidence" value="ECO:0007669"/>
    <property type="project" value="UniProtKB-UniRule"/>
</dbReference>
<dbReference type="FunFam" id="3.30.1310.10:FF:000002">
    <property type="entry name" value="Nucleoid-associated protein IKC_06587"/>
    <property type="match status" value="1"/>
</dbReference>
<dbReference type="Gene3D" id="3.30.1310.10">
    <property type="entry name" value="Nucleoid-associated protein YbaB-like domain"/>
    <property type="match status" value="1"/>
</dbReference>
<dbReference type="HAMAP" id="MF_00274">
    <property type="entry name" value="DNA_YbaB_EbfC"/>
    <property type="match status" value="1"/>
</dbReference>
<dbReference type="InterPro" id="IPR036894">
    <property type="entry name" value="YbaB-like_sf"/>
</dbReference>
<dbReference type="InterPro" id="IPR004401">
    <property type="entry name" value="YbaB/EbfC"/>
</dbReference>
<dbReference type="NCBIfam" id="TIGR00103">
    <property type="entry name" value="DNA_YbaB_EbfC"/>
    <property type="match status" value="1"/>
</dbReference>
<dbReference type="PANTHER" id="PTHR33449">
    <property type="entry name" value="NUCLEOID-ASSOCIATED PROTEIN YBAB"/>
    <property type="match status" value="1"/>
</dbReference>
<dbReference type="PANTHER" id="PTHR33449:SF1">
    <property type="entry name" value="NUCLEOID-ASSOCIATED PROTEIN YBAB"/>
    <property type="match status" value="1"/>
</dbReference>
<dbReference type="Pfam" id="PF02575">
    <property type="entry name" value="YbaB_DNA_bd"/>
    <property type="match status" value="1"/>
</dbReference>
<dbReference type="PIRSF" id="PIRSF004555">
    <property type="entry name" value="UCP004555"/>
    <property type="match status" value="1"/>
</dbReference>
<dbReference type="SUPFAM" id="SSF82607">
    <property type="entry name" value="YbaB-like"/>
    <property type="match status" value="1"/>
</dbReference>
<feature type="chain" id="PRO_1000197639" description="Nucleoid-associated protein BAA_0027">
    <location>
        <begin position="1"/>
        <end position="109"/>
    </location>
</feature>
<reference key="1">
    <citation type="submission" date="2009-04" db="EMBL/GenBank/DDBJ databases">
        <title>Genome sequence of Bacillus anthracis A0248.</title>
        <authorList>
            <person name="Dodson R.J."/>
            <person name="Munk A.C."/>
            <person name="Bruce D."/>
            <person name="Detter C."/>
            <person name="Tapia R."/>
            <person name="Sutton G."/>
            <person name="Sims D."/>
            <person name="Brettin T."/>
        </authorList>
    </citation>
    <scope>NUCLEOTIDE SEQUENCE [LARGE SCALE GENOMIC DNA]</scope>
    <source>
        <strain>A0248</strain>
    </source>
</reference>
<proteinExistence type="inferred from homology"/>
<gene>
    <name type="ordered locus">BAA_0027</name>
</gene>
<comment type="function">
    <text evidence="1">Binds to DNA and alters its conformation. May be involved in regulation of gene expression, nucleoid organization and DNA protection.</text>
</comment>
<comment type="subunit">
    <text evidence="1">Homodimer.</text>
</comment>
<comment type="subcellular location">
    <subcellularLocation>
        <location evidence="1">Cytoplasm</location>
        <location evidence="1">Nucleoid</location>
    </subcellularLocation>
</comment>
<comment type="similarity">
    <text evidence="1">Belongs to the YbaB/EbfC family.</text>
</comment>
<protein>
    <recommendedName>
        <fullName evidence="1">Nucleoid-associated protein BAA_0027</fullName>
    </recommendedName>
</protein>
<sequence length="109" mass="11863">MMRGGMGNMNNMMKQMQKMQKEMAKAQEELGEKTVEGTAGGGMITVIANGHKQILEVKVKEEVVDPEDIEMLQDLVLAATNDALKKADELSNSTMGKFTKGLNLPGGMF</sequence>
<organism>
    <name type="scientific">Bacillus anthracis (strain A0248)</name>
    <dbReference type="NCBI Taxonomy" id="592021"/>
    <lineage>
        <taxon>Bacteria</taxon>
        <taxon>Bacillati</taxon>
        <taxon>Bacillota</taxon>
        <taxon>Bacilli</taxon>
        <taxon>Bacillales</taxon>
        <taxon>Bacillaceae</taxon>
        <taxon>Bacillus</taxon>
        <taxon>Bacillus cereus group</taxon>
    </lineage>
</organism>
<name>Y027_BACAA</name>
<accession>C3P9G9</accession>
<keyword id="KW-0963">Cytoplasm</keyword>
<keyword id="KW-0238">DNA-binding</keyword>
<evidence type="ECO:0000255" key="1">
    <source>
        <dbReference type="HAMAP-Rule" id="MF_00274"/>
    </source>
</evidence>